<gene>
    <name evidence="1" type="primary">hisC</name>
    <name type="ordered locus">MAP_1294</name>
</gene>
<feature type="chain" id="PRO_0000153395" description="Histidinol-phosphate aminotransferase">
    <location>
        <begin position="1"/>
        <end position="398"/>
    </location>
</feature>
<feature type="region of interest" description="Disordered" evidence="2">
    <location>
        <begin position="1"/>
        <end position="30"/>
    </location>
</feature>
<feature type="compositionally biased region" description="Polar residues" evidence="2">
    <location>
        <begin position="1"/>
        <end position="10"/>
    </location>
</feature>
<feature type="modified residue" description="N6-(pyridoxal phosphate)lysine" evidence="1">
    <location>
        <position position="234"/>
    </location>
</feature>
<reference key="1">
    <citation type="journal article" date="2005" name="Proc. Natl. Acad. Sci. U.S.A.">
        <title>The complete genome sequence of Mycobacterium avium subspecies paratuberculosis.</title>
        <authorList>
            <person name="Li L."/>
            <person name="Bannantine J.P."/>
            <person name="Zhang Q."/>
            <person name="Amonsin A."/>
            <person name="May B.J."/>
            <person name="Alt D."/>
            <person name="Banerji N."/>
            <person name="Kanjilal S."/>
            <person name="Kapur V."/>
        </authorList>
    </citation>
    <scope>NUCLEOTIDE SEQUENCE [LARGE SCALE GENOMIC DNA]</scope>
    <source>
        <strain>ATCC BAA-968 / K-10</strain>
    </source>
</reference>
<name>HIS8_MYCPA</name>
<dbReference type="EC" id="2.6.1.9" evidence="1"/>
<dbReference type="EMBL" id="AE016958">
    <property type="protein sequence ID" value="AAS03611.1"/>
    <property type="molecule type" value="Genomic_DNA"/>
</dbReference>
<dbReference type="RefSeq" id="WP_003876206.1">
    <property type="nucleotide sequence ID" value="NZ_CP106873.1"/>
</dbReference>
<dbReference type="SMR" id="P61001"/>
<dbReference type="STRING" id="262316.MAP_1294"/>
<dbReference type="KEGG" id="mpa:MAP_1294"/>
<dbReference type="eggNOG" id="COG0079">
    <property type="taxonomic scope" value="Bacteria"/>
</dbReference>
<dbReference type="HOGENOM" id="CLU_017584_3_1_11"/>
<dbReference type="UniPathway" id="UPA00031">
    <property type="reaction ID" value="UER00012"/>
</dbReference>
<dbReference type="Proteomes" id="UP000000580">
    <property type="component" value="Chromosome"/>
</dbReference>
<dbReference type="GO" id="GO:0004400">
    <property type="term" value="F:histidinol-phosphate transaminase activity"/>
    <property type="evidence" value="ECO:0007669"/>
    <property type="project" value="UniProtKB-UniRule"/>
</dbReference>
<dbReference type="GO" id="GO:0030170">
    <property type="term" value="F:pyridoxal phosphate binding"/>
    <property type="evidence" value="ECO:0007669"/>
    <property type="project" value="InterPro"/>
</dbReference>
<dbReference type="GO" id="GO:0000105">
    <property type="term" value="P:L-histidine biosynthetic process"/>
    <property type="evidence" value="ECO:0007669"/>
    <property type="project" value="UniProtKB-UniRule"/>
</dbReference>
<dbReference type="CDD" id="cd00609">
    <property type="entry name" value="AAT_like"/>
    <property type="match status" value="1"/>
</dbReference>
<dbReference type="Gene3D" id="3.90.1150.10">
    <property type="entry name" value="Aspartate Aminotransferase, domain 1"/>
    <property type="match status" value="1"/>
</dbReference>
<dbReference type="Gene3D" id="3.40.640.10">
    <property type="entry name" value="Type I PLP-dependent aspartate aminotransferase-like (Major domain)"/>
    <property type="match status" value="1"/>
</dbReference>
<dbReference type="HAMAP" id="MF_01023">
    <property type="entry name" value="HisC_aminotrans_2"/>
    <property type="match status" value="1"/>
</dbReference>
<dbReference type="InterPro" id="IPR001917">
    <property type="entry name" value="Aminotrans_II_pyridoxalP_BS"/>
</dbReference>
<dbReference type="InterPro" id="IPR004839">
    <property type="entry name" value="Aminotransferase_I/II_large"/>
</dbReference>
<dbReference type="InterPro" id="IPR005861">
    <property type="entry name" value="HisP_aminotrans"/>
</dbReference>
<dbReference type="InterPro" id="IPR015424">
    <property type="entry name" value="PyrdxlP-dep_Trfase"/>
</dbReference>
<dbReference type="InterPro" id="IPR015421">
    <property type="entry name" value="PyrdxlP-dep_Trfase_major"/>
</dbReference>
<dbReference type="InterPro" id="IPR015422">
    <property type="entry name" value="PyrdxlP-dep_Trfase_small"/>
</dbReference>
<dbReference type="NCBIfam" id="TIGR01141">
    <property type="entry name" value="hisC"/>
    <property type="match status" value="1"/>
</dbReference>
<dbReference type="NCBIfam" id="NF002877">
    <property type="entry name" value="PRK03317.1"/>
    <property type="match status" value="1"/>
</dbReference>
<dbReference type="PANTHER" id="PTHR42885:SF2">
    <property type="entry name" value="HISTIDINOL-PHOSPHATE AMINOTRANSFERASE"/>
    <property type="match status" value="1"/>
</dbReference>
<dbReference type="PANTHER" id="PTHR42885">
    <property type="entry name" value="HISTIDINOL-PHOSPHATE AMINOTRANSFERASE-RELATED"/>
    <property type="match status" value="1"/>
</dbReference>
<dbReference type="Pfam" id="PF00155">
    <property type="entry name" value="Aminotran_1_2"/>
    <property type="match status" value="1"/>
</dbReference>
<dbReference type="SUPFAM" id="SSF53383">
    <property type="entry name" value="PLP-dependent transferases"/>
    <property type="match status" value="1"/>
</dbReference>
<dbReference type="PROSITE" id="PS00599">
    <property type="entry name" value="AA_TRANSFER_CLASS_2"/>
    <property type="match status" value="1"/>
</dbReference>
<keyword id="KW-0028">Amino-acid biosynthesis</keyword>
<keyword id="KW-0032">Aminotransferase</keyword>
<keyword id="KW-0368">Histidine biosynthesis</keyword>
<keyword id="KW-0663">Pyridoxal phosphate</keyword>
<keyword id="KW-1185">Reference proteome</keyword>
<keyword id="KW-0808">Transferase</keyword>
<accession>P61001</accession>
<organism>
    <name type="scientific">Mycolicibacterium paratuberculosis (strain ATCC BAA-968 / K-10)</name>
    <name type="common">Mycobacterium paratuberculosis</name>
    <dbReference type="NCBI Taxonomy" id="262316"/>
    <lineage>
        <taxon>Bacteria</taxon>
        <taxon>Bacillati</taxon>
        <taxon>Actinomycetota</taxon>
        <taxon>Actinomycetes</taxon>
        <taxon>Mycobacteriales</taxon>
        <taxon>Mycobacteriaceae</taxon>
        <taxon>Mycobacterium</taxon>
        <taxon>Mycobacterium avium complex (MAC)</taxon>
    </lineage>
</organism>
<sequence length="398" mass="42212">MTGQRATPQPTLDDLPLRDDLRGKSPYGAPQLAVPVRLNTNENPHPPSRALVDDVVRSVARAAADLHRYPDRDAVQLRSDLARYLTAQTGVQLGVENLWAANGSNEILQQLLQAFGGPGRSAIGFVPSYSMHPIISDGTRTEWLQAARADDFSLDVDAAVAAVTERTPDVVFVASPNNPSGQSVSLSGLRRLLDAAPGIVIVDEAYGEFSSQPSAVQLVGEYPTKLVVTRTMSKAFAFAGGRLGYLIATPAVIEAMLLVRLPYHLSSVTQAAARAALRHADDTLGSVAALIAERERVSTALTGMGFRVIPSDANFVLFGEFTDAPASWQRYLDAGVLIRDVGIPGYLRATTGLAEENDAFLRASAQLAATELAPVNVGAIANAAEPRAAGRDRVLGAP</sequence>
<protein>
    <recommendedName>
        <fullName evidence="1">Histidinol-phosphate aminotransferase</fullName>
        <ecNumber evidence="1">2.6.1.9</ecNumber>
    </recommendedName>
    <alternativeName>
        <fullName evidence="1">Imidazole acetol-phosphate transaminase</fullName>
    </alternativeName>
</protein>
<proteinExistence type="inferred from homology"/>
<comment type="catalytic activity">
    <reaction evidence="1">
        <text>L-histidinol phosphate + 2-oxoglutarate = 3-(imidazol-4-yl)-2-oxopropyl phosphate + L-glutamate</text>
        <dbReference type="Rhea" id="RHEA:23744"/>
        <dbReference type="ChEBI" id="CHEBI:16810"/>
        <dbReference type="ChEBI" id="CHEBI:29985"/>
        <dbReference type="ChEBI" id="CHEBI:57766"/>
        <dbReference type="ChEBI" id="CHEBI:57980"/>
        <dbReference type="EC" id="2.6.1.9"/>
    </reaction>
</comment>
<comment type="cofactor">
    <cofactor evidence="1">
        <name>pyridoxal 5'-phosphate</name>
        <dbReference type="ChEBI" id="CHEBI:597326"/>
    </cofactor>
</comment>
<comment type="pathway">
    <text evidence="1">Amino-acid biosynthesis; L-histidine biosynthesis; L-histidine from 5-phospho-alpha-D-ribose 1-diphosphate: step 7/9.</text>
</comment>
<comment type="subunit">
    <text evidence="1">Homodimer.</text>
</comment>
<comment type="similarity">
    <text evidence="1">Belongs to the class-II pyridoxal-phosphate-dependent aminotransferase family. Histidinol-phosphate aminotransferase subfamily.</text>
</comment>
<evidence type="ECO:0000255" key="1">
    <source>
        <dbReference type="HAMAP-Rule" id="MF_01023"/>
    </source>
</evidence>
<evidence type="ECO:0000256" key="2">
    <source>
        <dbReference type="SAM" id="MobiDB-lite"/>
    </source>
</evidence>